<dbReference type="EC" id="2.5.1.-" evidence="1"/>
<dbReference type="EMBL" id="CP000789">
    <property type="protein sequence ID" value="ABU70564.1"/>
    <property type="molecule type" value="Genomic_DNA"/>
</dbReference>
<dbReference type="RefSeq" id="WP_005426262.1">
    <property type="nucleotide sequence ID" value="NC_022269.1"/>
</dbReference>
<dbReference type="SMR" id="A7N1I8"/>
<dbReference type="KEGG" id="vha:VIBHAR_01594"/>
<dbReference type="PATRIC" id="fig|338187.25.peg.1068"/>
<dbReference type="Proteomes" id="UP000008152">
    <property type="component" value="Chromosome I"/>
</dbReference>
<dbReference type="GO" id="GO:0008168">
    <property type="term" value="F:methyltransferase activity"/>
    <property type="evidence" value="ECO:0007669"/>
    <property type="project" value="TreeGrafter"/>
</dbReference>
<dbReference type="GO" id="GO:0016765">
    <property type="term" value="F:transferase activity, transferring alkyl or aryl (other than methyl) groups"/>
    <property type="evidence" value="ECO:0007669"/>
    <property type="project" value="UniProtKB-UniRule"/>
</dbReference>
<dbReference type="GO" id="GO:0002098">
    <property type="term" value="P:tRNA wobble uridine modification"/>
    <property type="evidence" value="ECO:0007669"/>
    <property type="project" value="InterPro"/>
</dbReference>
<dbReference type="CDD" id="cd02440">
    <property type="entry name" value="AdoMet_MTases"/>
    <property type="match status" value="1"/>
</dbReference>
<dbReference type="Gene3D" id="3.40.50.150">
    <property type="entry name" value="Vaccinia Virus protein VP39"/>
    <property type="match status" value="1"/>
</dbReference>
<dbReference type="HAMAP" id="MF_01590">
    <property type="entry name" value="tRNA_carboxymethyltr_CmoB"/>
    <property type="match status" value="1"/>
</dbReference>
<dbReference type="InterPro" id="IPR010017">
    <property type="entry name" value="CmoB"/>
</dbReference>
<dbReference type="InterPro" id="IPR027555">
    <property type="entry name" value="Mo5U34_MeTrfas-like"/>
</dbReference>
<dbReference type="InterPro" id="IPR029063">
    <property type="entry name" value="SAM-dependent_MTases_sf"/>
</dbReference>
<dbReference type="NCBIfam" id="NF011650">
    <property type="entry name" value="PRK15068.1"/>
    <property type="match status" value="1"/>
</dbReference>
<dbReference type="NCBIfam" id="TIGR00452">
    <property type="entry name" value="tRNA 5-methoxyuridine(34)/uridine 5-oxyacetic acid(34) synthase CmoB"/>
    <property type="match status" value="1"/>
</dbReference>
<dbReference type="PANTHER" id="PTHR43464">
    <property type="entry name" value="METHYLTRANSFERASE"/>
    <property type="match status" value="1"/>
</dbReference>
<dbReference type="PANTHER" id="PTHR43464:SF95">
    <property type="entry name" value="TRNA U34 CARBOXYMETHYLTRANSFERASE"/>
    <property type="match status" value="1"/>
</dbReference>
<dbReference type="Pfam" id="PF08003">
    <property type="entry name" value="Methyltransf_9"/>
    <property type="match status" value="1"/>
</dbReference>
<dbReference type="SUPFAM" id="SSF53335">
    <property type="entry name" value="S-adenosyl-L-methionine-dependent methyltransferases"/>
    <property type="match status" value="1"/>
</dbReference>
<proteinExistence type="inferred from homology"/>
<keyword id="KW-0808">Transferase</keyword>
<keyword id="KW-0819">tRNA processing</keyword>
<feature type="chain" id="PRO_0000313987" description="tRNA U34 carboxymethyltransferase">
    <location>
        <begin position="1"/>
        <end position="323"/>
    </location>
</feature>
<feature type="binding site" evidence="1">
    <location>
        <position position="91"/>
    </location>
    <ligand>
        <name>carboxy-S-adenosyl-L-methionine</name>
        <dbReference type="ChEBI" id="CHEBI:134278"/>
    </ligand>
</feature>
<feature type="binding site" evidence="1">
    <location>
        <position position="105"/>
    </location>
    <ligand>
        <name>carboxy-S-adenosyl-L-methionine</name>
        <dbReference type="ChEBI" id="CHEBI:134278"/>
    </ligand>
</feature>
<feature type="binding site" evidence="1">
    <location>
        <position position="110"/>
    </location>
    <ligand>
        <name>carboxy-S-adenosyl-L-methionine</name>
        <dbReference type="ChEBI" id="CHEBI:134278"/>
    </ligand>
</feature>
<feature type="binding site" evidence="1">
    <location>
        <position position="130"/>
    </location>
    <ligand>
        <name>carboxy-S-adenosyl-L-methionine</name>
        <dbReference type="ChEBI" id="CHEBI:134278"/>
    </ligand>
</feature>
<feature type="binding site" evidence="1">
    <location>
        <begin position="152"/>
        <end position="154"/>
    </location>
    <ligand>
        <name>carboxy-S-adenosyl-L-methionine</name>
        <dbReference type="ChEBI" id="CHEBI:134278"/>
    </ligand>
</feature>
<feature type="binding site" evidence="1">
    <location>
        <begin position="181"/>
        <end position="182"/>
    </location>
    <ligand>
        <name>carboxy-S-adenosyl-L-methionine</name>
        <dbReference type="ChEBI" id="CHEBI:134278"/>
    </ligand>
</feature>
<feature type="binding site" evidence="1">
    <location>
        <position position="196"/>
    </location>
    <ligand>
        <name>carboxy-S-adenosyl-L-methionine</name>
        <dbReference type="ChEBI" id="CHEBI:134278"/>
    </ligand>
</feature>
<feature type="binding site" evidence="1">
    <location>
        <position position="200"/>
    </location>
    <ligand>
        <name>carboxy-S-adenosyl-L-methionine</name>
        <dbReference type="ChEBI" id="CHEBI:134278"/>
    </ligand>
</feature>
<feature type="binding site" evidence="1">
    <location>
        <position position="315"/>
    </location>
    <ligand>
        <name>carboxy-S-adenosyl-L-methionine</name>
        <dbReference type="ChEBI" id="CHEBI:134278"/>
    </ligand>
</feature>
<gene>
    <name evidence="1" type="primary">cmoB</name>
    <name type="ordered locus">VIBHAR_01594</name>
</gene>
<name>CMOB_VIBC1</name>
<evidence type="ECO:0000255" key="1">
    <source>
        <dbReference type="HAMAP-Rule" id="MF_01590"/>
    </source>
</evidence>
<accession>A7N1I8</accession>
<organism>
    <name type="scientific">Vibrio campbellii (strain ATCC BAA-1116)</name>
    <dbReference type="NCBI Taxonomy" id="2902295"/>
    <lineage>
        <taxon>Bacteria</taxon>
        <taxon>Pseudomonadati</taxon>
        <taxon>Pseudomonadota</taxon>
        <taxon>Gammaproteobacteria</taxon>
        <taxon>Vibrionales</taxon>
        <taxon>Vibrionaceae</taxon>
        <taxon>Vibrio</taxon>
    </lineage>
</organism>
<reference key="1">
    <citation type="submission" date="2007-08" db="EMBL/GenBank/DDBJ databases">
        <authorList>
            <consortium name="The Vibrio harveyi Genome Sequencing Project"/>
            <person name="Bassler B."/>
            <person name="Clifton S.W."/>
            <person name="Fulton L."/>
            <person name="Delehaunty K."/>
            <person name="Fronick C."/>
            <person name="Harrison M."/>
            <person name="Markivic C."/>
            <person name="Fulton R."/>
            <person name="Tin-Wollam A.-M."/>
            <person name="Shah N."/>
            <person name="Pepin K."/>
            <person name="Nash W."/>
            <person name="Thiruvilangam P."/>
            <person name="Bhonagiri V."/>
            <person name="Waters C."/>
            <person name="Tu K.C."/>
            <person name="Irgon J."/>
            <person name="Wilson R.K."/>
        </authorList>
    </citation>
    <scope>NUCLEOTIDE SEQUENCE [LARGE SCALE GENOMIC DNA]</scope>
    <source>
        <strain>ATCC BAA-1116 / BB120</strain>
    </source>
</reference>
<sequence>MFNFANFYQLIAQDTRLQPWLNVLPQQLTDWQNAEHGDFGRWLKALNKIPQGAPNQVDIKNSVTISNDTPFHEGELKKLESLLRTFHPWRKGPYTVHGIHIDTEWRSDWKWDRVLPHISPLKNRSVLDVGCGNGYHMWRMLGEGARLTVGIDPSHLFLIQFEAIRKLMGDDQRAHLLPLGIEQLPKLEAFDTVFSMGVLYHRRSPLDHLVQLKDQLVSGGELVLETLVIEGDENAVLVPTSRYAQMRNVYFFPSAKALKVWLELVGFKDVRIVDENVTTVGEQRTTDWMTHNSLPDYLDPNDPSKTVEGYPAPRRAVLVATKP</sequence>
<protein>
    <recommendedName>
        <fullName evidence="1">tRNA U34 carboxymethyltransferase</fullName>
        <ecNumber evidence="1">2.5.1.-</ecNumber>
    </recommendedName>
</protein>
<comment type="function">
    <text evidence="1">Catalyzes carboxymethyl transfer from carboxy-S-adenosyl-L-methionine (Cx-SAM) to 5-hydroxyuridine (ho5U) to form 5-carboxymethoxyuridine (cmo5U) at position 34 in tRNAs.</text>
</comment>
<comment type="catalytic activity">
    <reaction evidence="1">
        <text>carboxy-S-adenosyl-L-methionine + 5-hydroxyuridine(34) in tRNA = 5-carboxymethoxyuridine(34) in tRNA + S-adenosyl-L-homocysteine + H(+)</text>
        <dbReference type="Rhea" id="RHEA:52848"/>
        <dbReference type="Rhea" id="RHEA-COMP:13381"/>
        <dbReference type="Rhea" id="RHEA-COMP:13383"/>
        <dbReference type="ChEBI" id="CHEBI:15378"/>
        <dbReference type="ChEBI" id="CHEBI:57856"/>
        <dbReference type="ChEBI" id="CHEBI:134278"/>
        <dbReference type="ChEBI" id="CHEBI:136877"/>
        <dbReference type="ChEBI" id="CHEBI:136879"/>
    </reaction>
</comment>
<comment type="subunit">
    <text evidence="1">Homotetramer.</text>
</comment>
<comment type="similarity">
    <text evidence="1">Belongs to the class I-like SAM-binding methyltransferase superfamily. CmoB family.</text>
</comment>